<dbReference type="EMBL" id="BA000018">
    <property type="protein sequence ID" value="BAB42068.1"/>
    <property type="molecule type" value="Genomic_DNA"/>
</dbReference>
<dbReference type="PIR" id="A89864">
    <property type="entry name" value="A89864"/>
</dbReference>
<dbReference type="RefSeq" id="WP_000670752.1">
    <property type="nucleotide sequence ID" value="NC_002745.2"/>
</dbReference>
<dbReference type="SMR" id="Q7A6H3"/>
<dbReference type="EnsemblBacteria" id="BAB42068">
    <property type="protein sequence ID" value="BAB42068"/>
    <property type="gene ID" value="BAB42068"/>
</dbReference>
<dbReference type="KEGG" id="sau:SA0829"/>
<dbReference type="HOGENOM" id="CLU_028458_3_1_9"/>
<dbReference type="GO" id="GO:0018773">
    <property type="term" value="F:acetylpyruvate hydrolase activity"/>
    <property type="evidence" value="ECO:0007669"/>
    <property type="project" value="TreeGrafter"/>
</dbReference>
<dbReference type="GO" id="GO:0046872">
    <property type="term" value="F:metal ion binding"/>
    <property type="evidence" value="ECO:0007669"/>
    <property type="project" value="UniProtKB-KW"/>
</dbReference>
<dbReference type="FunFam" id="3.90.850.10:FF:000010">
    <property type="entry name" value="FAA hydrolase family protein"/>
    <property type="match status" value="1"/>
</dbReference>
<dbReference type="Gene3D" id="3.90.850.10">
    <property type="entry name" value="Fumarylacetoacetase-like, C-terminal domain"/>
    <property type="match status" value="1"/>
</dbReference>
<dbReference type="InterPro" id="IPR011234">
    <property type="entry name" value="Fumarylacetoacetase-like_C"/>
</dbReference>
<dbReference type="InterPro" id="IPR036663">
    <property type="entry name" value="Fumarylacetoacetase_C_sf"/>
</dbReference>
<dbReference type="PANTHER" id="PTHR11820">
    <property type="entry name" value="ACYLPYRUVASE"/>
    <property type="match status" value="1"/>
</dbReference>
<dbReference type="PANTHER" id="PTHR11820:SF7">
    <property type="entry name" value="ACYLPYRUVASE FAHD1, MITOCHONDRIAL"/>
    <property type="match status" value="1"/>
</dbReference>
<dbReference type="Pfam" id="PF01557">
    <property type="entry name" value="FAA_hydrolase"/>
    <property type="match status" value="1"/>
</dbReference>
<dbReference type="SUPFAM" id="SSF56529">
    <property type="entry name" value="FAH"/>
    <property type="match status" value="1"/>
</dbReference>
<reference key="1">
    <citation type="journal article" date="2001" name="Lancet">
        <title>Whole genome sequencing of meticillin-resistant Staphylococcus aureus.</title>
        <authorList>
            <person name="Kuroda M."/>
            <person name="Ohta T."/>
            <person name="Uchiyama I."/>
            <person name="Baba T."/>
            <person name="Yuzawa H."/>
            <person name="Kobayashi I."/>
            <person name="Cui L."/>
            <person name="Oguchi A."/>
            <person name="Aoki K."/>
            <person name="Nagai Y."/>
            <person name="Lian J.-Q."/>
            <person name="Ito T."/>
            <person name="Kanamori M."/>
            <person name="Matsumaru H."/>
            <person name="Maruyama A."/>
            <person name="Murakami H."/>
            <person name="Hosoyama A."/>
            <person name="Mizutani-Ui Y."/>
            <person name="Takahashi N.K."/>
            <person name="Sawano T."/>
            <person name="Inoue R."/>
            <person name="Kaito C."/>
            <person name="Sekimizu K."/>
            <person name="Hirakawa H."/>
            <person name="Kuhara S."/>
            <person name="Goto S."/>
            <person name="Yabuzaki J."/>
            <person name="Kanehisa M."/>
            <person name="Yamashita A."/>
            <person name="Oshima K."/>
            <person name="Furuya K."/>
            <person name="Yoshino C."/>
            <person name="Shiba T."/>
            <person name="Hattori M."/>
            <person name="Ogasawara N."/>
            <person name="Hayashi H."/>
            <person name="Hiramatsu K."/>
        </authorList>
    </citation>
    <scope>NUCLEOTIDE SEQUENCE [LARGE SCALE GENOMIC DNA]</scope>
    <source>
        <strain>N315</strain>
    </source>
</reference>
<reference key="2">
    <citation type="journal article" date="2005" name="J. Microbiol. Methods">
        <title>Correlation of proteomic and transcriptomic profiles of Staphylococcus aureus during the post-exponential phase of growth.</title>
        <authorList>
            <person name="Scherl A."/>
            <person name="Francois P."/>
            <person name="Bento M."/>
            <person name="Deshusses J.M."/>
            <person name="Charbonnier Y."/>
            <person name="Converset V."/>
            <person name="Huyghe A."/>
            <person name="Walter N."/>
            <person name="Hoogland C."/>
            <person name="Appel R.D."/>
            <person name="Sanchez J.-C."/>
            <person name="Zimmermann-Ivol C.G."/>
            <person name="Corthals G.L."/>
            <person name="Hochstrasser D.F."/>
            <person name="Schrenzel J."/>
        </authorList>
    </citation>
    <scope>IDENTIFICATION BY MASS SPECTROMETRY</scope>
    <source>
        <strain>N315</strain>
    </source>
</reference>
<reference key="3">
    <citation type="submission" date="2007-10" db="UniProtKB">
        <title>Shotgun proteomic analysis of total and membrane protein extracts of S. aureus strain N315.</title>
        <authorList>
            <person name="Vaezzadeh A.R."/>
            <person name="Deshusses J."/>
            <person name="Lescuyer P."/>
            <person name="Hochstrasser D.F."/>
        </authorList>
    </citation>
    <scope>IDENTIFICATION BY MASS SPECTROMETRY [LARGE SCALE ANALYSIS]</scope>
    <source>
        <strain>N315</strain>
    </source>
</reference>
<protein>
    <recommendedName>
        <fullName>Uncharacterized protein SA0829</fullName>
    </recommendedName>
</protein>
<organism>
    <name type="scientific">Staphylococcus aureus (strain N315)</name>
    <dbReference type="NCBI Taxonomy" id="158879"/>
    <lineage>
        <taxon>Bacteria</taxon>
        <taxon>Bacillati</taxon>
        <taxon>Bacillota</taxon>
        <taxon>Bacilli</taxon>
        <taxon>Bacillales</taxon>
        <taxon>Staphylococcaceae</taxon>
        <taxon>Staphylococcus</taxon>
    </lineage>
</organism>
<keyword id="KW-0479">Metal-binding</keyword>
<accession>Q7A6H3</accession>
<proteinExistence type="evidence at protein level"/>
<feature type="chain" id="PRO_0000303223" description="Uncharacterized protein SA0829">
    <location>
        <begin position="1"/>
        <end position="300"/>
    </location>
</feature>
<feature type="binding site" evidence="1">
    <location>
        <position position="146"/>
    </location>
    <ligand>
        <name>a divalent metal cation</name>
        <dbReference type="ChEBI" id="CHEBI:60240"/>
    </ligand>
</feature>
<feature type="binding site" evidence="1">
    <location>
        <position position="148"/>
    </location>
    <ligand>
        <name>a divalent metal cation</name>
        <dbReference type="ChEBI" id="CHEBI:60240"/>
    </ligand>
</feature>
<feature type="binding site" evidence="1">
    <location>
        <position position="177"/>
    </location>
    <ligand>
        <name>a divalent metal cation</name>
        <dbReference type="ChEBI" id="CHEBI:60240"/>
    </ligand>
</feature>
<evidence type="ECO:0000250" key="1"/>
<evidence type="ECO:0000305" key="2"/>
<gene>
    <name type="ordered locus">SA0829</name>
</gene>
<name>Y829_STAAN</name>
<comment type="similarity">
    <text evidence="2">Belongs to the FAH family.</text>
</comment>
<sequence length="300" mass="33113">MKFLSFKYNDKTSYGVKVKREDAVWDLTQVFADFAEGDFHPKTLLAGLQQNHTLDFQEQVRKAVVAAEDSGKAEDYKISFNDIEFLPPVTPPNNVIAFGRNYKDHANELNHEVEKLYVFTKAASSLTGDNATIPNHKDITDQLDYEGELGIVIGKSGEKIPKALALDYVYGYTIINDITDRKAQSEQDQAFLSKSLTGGCPMGPYIVTKDELPLPENVNIVTKVNNEIRQDGNTGEMILKIDELIEEISKYVALHPGDIIATGTPAGVGAGMQPPKFLQPGDEVKVTIDNIGTLTTYIAK</sequence>